<keyword id="KW-0131">Cell cycle</keyword>
<keyword id="KW-0132">Cell division</keyword>
<keyword id="KW-0997">Cell inner membrane</keyword>
<keyword id="KW-1003">Cell membrane</keyword>
<keyword id="KW-0133">Cell shape</keyword>
<keyword id="KW-0961">Cell wall biogenesis/degradation</keyword>
<keyword id="KW-0328">Glycosyltransferase</keyword>
<keyword id="KW-0472">Membrane</keyword>
<keyword id="KW-0573">Peptidoglycan synthesis</keyword>
<keyword id="KW-0808">Transferase</keyword>
<accession>A7ZW42</accession>
<sequence>MSGQGKRLMVMAGGTGGHVFPGLAVAHHLMAQGWQVRWLGTADRMEADLVPKHGIEIDFIRISGLRGKGIKALIAAPLRIFNAWRQARAIMKAYKPDVVLGMGGYVSGPGGLAAWSLGIPVVLHEQNGIAGLTNKWLAKIATKVMQAFPGAFPNAEVVGNPVRTDVLALSLPQQRLAGREGPVRVLVVGGSQGARILNQTMPQVAAKLGDSVTIWHQSGKGSQQSVEQAYAEAGQPQHKVTEFIDDMAAAYAWADVVVCRSGALTVSEIAAAGLPALFVPFQHKDRQQYWNALPLEKAGAAKIIEQPQLSVDAVANTLAGWSRETLLTMAERARAASIPDATERVANEVSRVARA</sequence>
<gene>
    <name evidence="1" type="primary">murG</name>
    <name type="ordered locus">EcHS_A0096</name>
</gene>
<proteinExistence type="inferred from homology"/>
<protein>
    <recommendedName>
        <fullName evidence="1">UDP-N-acetylglucosamine--N-acetylmuramyl-(pentapeptide) pyrophosphoryl-undecaprenol N-acetylglucosamine transferase</fullName>
        <ecNumber evidence="1">2.4.1.227</ecNumber>
    </recommendedName>
    <alternativeName>
        <fullName evidence="1">Undecaprenyl-PP-MurNAc-pentapeptide-UDPGlcNAc GlcNAc transferase</fullName>
    </alternativeName>
</protein>
<feature type="chain" id="PRO_1000057248" description="UDP-N-acetylglucosamine--N-acetylmuramyl-(pentapeptide) pyrophosphoryl-undecaprenol N-acetylglucosamine transferase">
    <location>
        <begin position="1"/>
        <end position="355"/>
    </location>
</feature>
<feature type="binding site" evidence="1">
    <location>
        <begin position="15"/>
        <end position="17"/>
    </location>
    <ligand>
        <name>UDP-N-acetyl-alpha-D-glucosamine</name>
        <dbReference type="ChEBI" id="CHEBI:57705"/>
    </ligand>
</feature>
<feature type="binding site" evidence="1">
    <location>
        <position position="127"/>
    </location>
    <ligand>
        <name>UDP-N-acetyl-alpha-D-glucosamine</name>
        <dbReference type="ChEBI" id="CHEBI:57705"/>
    </ligand>
</feature>
<feature type="binding site" evidence="1">
    <location>
        <position position="163"/>
    </location>
    <ligand>
        <name>UDP-N-acetyl-alpha-D-glucosamine</name>
        <dbReference type="ChEBI" id="CHEBI:57705"/>
    </ligand>
</feature>
<feature type="binding site" evidence="1">
    <location>
        <position position="191"/>
    </location>
    <ligand>
        <name>UDP-N-acetyl-alpha-D-glucosamine</name>
        <dbReference type="ChEBI" id="CHEBI:57705"/>
    </ligand>
</feature>
<feature type="binding site" evidence="1">
    <location>
        <position position="244"/>
    </location>
    <ligand>
        <name>UDP-N-acetyl-alpha-D-glucosamine</name>
        <dbReference type="ChEBI" id="CHEBI:57705"/>
    </ligand>
</feature>
<feature type="binding site" evidence="1">
    <location>
        <begin position="263"/>
        <end position="268"/>
    </location>
    <ligand>
        <name>UDP-N-acetyl-alpha-D-glucosamine</name>
        <dbReference type="ChEBI" id="CHEBI:57705"/>
    </ligand>
</feature>
<feature type="binding site" evidence="1">
    <location>
        <position position="288"/>
    </location>
    <ligand>
        <name>UDP-N-acetyl-alpha-D-glucosamine</name>
        <dbReference type="ChEBI" id="CHEBI:57705"/>
    </ligand>
</feature>
<organism>
    <name type="scientific">Escherichia coli O9:H4 (strain HS)</name>
    <dbReference type="NCBI Taxonomy" id="331112"/>
    <lineage>
        <taxon>Bacteria</taxon>
        <taxon>Pseudomonadati</taxon>
        <taxon>Pseudomonadota</taxon>
        <taxon>Gammaproteobacteria</taxon>
        <taxon>Enterobacterales</taxon>
        <taxon>Enterobacteriaceae</taxon>
        <taxon>Escherichia</taxon>
    </lineage>
</organism>
<comment type="function">
    <text evidence="1">Cell wall formation. Catalyzes the transfer of a GlcNAc subunit on undecaprenyl-pyrophosphoryl-MurNAc-pentapeptide (lipid intermediate I) to form undecaprenyl-pyrophosphoryl-MurNAc-(pentapeptide)GlcNAc (lipid intermediate II).</text>
</comment>
<comment type="catalytic activity">
    <reaction evidence="1">
        <text>di-trans,octa-cis-undecaprenyl diphospho-N-acetyl-alpha-D-muramoyl-L-alanyl-D-glutamyl-meso-2,6-diaminopimeloyl-D-alanyl-D-alanine + UDP-N-acetyl-alpha-D-glucosamine = di-trans,octa-cis-undecaprenyl diphospho-[N-acetyl-alpha-D-glucosaminyl-(1-&gt;4)]-N-acetyl-alpha-D-muramoyl-L-alanyl-D-glutamyl-meso-2,6-diaminopimeloyl-D-alanyl-D-alanine + UDP + H(+)</text>
        <dbReference type="Rhea" id="RHEA:31227"/>
        <dbReference type="ChEBI" id="CHEBI:15378"/>
        <dbReference type="ChEBI" id="CHEBI:57705"/>
        <dbReference type="ChEBI" id="CHEBI:58223"/>
        <dbReference type="ChEBI" id="CHEBI:61387"/>
        <dbReference type="ChEBI" id="CHEBI:61388"/>
        <dbReference type="EC" id="2.4.1.227"/>
    </reaction>
</comment>
<comment type="pathway">
    <text evidence="1">Cell wall biogenesis; peptidoglycan biosynthesis.</text>
</comment>
<comment type="subcellular location">
    <subcellularLocation>
        <location evidence="1">Cell inner membrane</location>
        <topology evidence="1">Peripheral membrane protein</topology>
        <orientation evidence="1">Cytoplasmic side</orientation>
    </subcellularLocation>
</comment>
<comment type="similarity">
    <text evidence="1">Belongs to the glycosyltransferase 28 family. MurG subfamily.</text>
</comment>
<reference key="1">
    <citation type="journal article" date="2008" name="J. Bacteriol.">
        <title>The pangenome structure of Escherichia coli: comparative genomic analysis of E. coli commensal and pathogenic isolates.</title>
        <authorList>
            <person name="Rasko D.A."/>
            <person name="Rosovitz M.J."/>
            <person name="Myers G.S.A."/>
            <person name="Mongodin E.F."/>
            <person name="Fricke W.F."/>
            <person name="Gajer P."/>
            <person name="Crabtree J."/>
            <person name="Sebaihia M."/>
            <person name="Thomson N.R."/>
            <person name="Chaudhuri R."/>
            <person name="Henderson I.R."/>
            <person name="Sperandio V."/>
            <person name="Ravel J."/>
        </authorList>
    </citation>
    <scope>NUCLEOTIDE SEQUENCE [LARGE SCALE GENOMIC DNA]</scope>
    <source>
        <strain>HS</strain>
    </source>
</reference>
<evidence type="ECO:0000255" key="1">
    <source>
        <dbReference type="HAMAP-Rule" id="MF_00033"/>
    </source>
</evidence>
<name>MURG_ECOHS</name>
<dbReference type="EC" id="2.4.1.227" evidence="1"/>
<dbReference type="EMBL" id="CP000802">
    <property type="protein sequence ID" value="ABV04496.1"/>
    <property type="molecule type" value="Genomic_DNA"/>
</dbReference>
<dbReference type="RefSeq" id="WP_000016569.1">
    <property type="nucleotide sequence ID" value="NC_009800.1"/>
</dbReference>
<dbReference type="SMR" id="A7ZW42"/>
<dbReference type="CAZy" id="GT28">
    <property type="family name" value="Glycosyltransferase Family 28"/>
</dbReference>
<dbReference type="KEGG" id="ecx:EcHS_A0096"/>
<dbReference type="HOGENOM" id="CLU_037404_2_0_6"/>
<dbReference type="UniPathway" id="UPA00219"/>
<dbReference type="GO" id="GO:0005886">
    <property type="term" value="C:plasma membrane"/>
    <property type="evidence" value="ECO:0007669"/>
    <property type="project" value="UniProtKB-SubCell"/>
</dbReference>
<dbReference type="GO" id="GO:0051991">
    <property type="term" value="F:UDP-N-acetyl-D-glucosamine:N-acetylmuramoyl-L-alanyl-D-glutamyl-meso-2,6-diaminopimelyl-D-alanyl-D-alanine-diphosphoundecaprenol 4-beta-N-acetylglucosaminlytransferase activity"/>
    <property type="evidence" value="ECO:0007669"/>
    <property type="project" value="RHEA"/>
</dbReference>
<dbReference type="GO" id="GO:0050511">
    <property type="term" value="F:undecaprenyldiphospho-muramoylpentapeptide beta-N-acetylglucosaminyltransferase activity"/>
    <property type="evidence" value="ECO:0007669"/>
    <property type="project" value="UniProtKB-UniRule"/>
</dbReference>
<dbReference type="GO" id="GO:0005975">
    <property type="term" value="P:carbohydrate metabolic process"/>
    <property type="evidence" value="ECO:0007669"/>
    <property type="project" value="InterPro"/>
</dbReference>
<dbReference type="GO" id="GO:0051301">
    <property type="term" value="P:cell division"/>
    <property type="evidence" value="ECO:0007669"/>
    <property type="project" value="UniProtKB-KW"/>
</dbReference>
<dbReference type="GO" id="GO:0071555">
    <property type="term" value="P:cell wall organization"/>
    <property type="evidence" value="ECO:0007669"/>
    <property type="project" value="UniProtKB-KW"/>
</dbReference>
<dbReference type="GO" id="GO:0030259">
    <property type="term" value="P:lipid glycosylation"/>
    <property type="evidence" value="ECO:0007669"/>
    <property type="project" value="UniProtKB-UniRule"/>
</dbReference>
<dbReference type="GO" id="GO:0009252">
    <property type="term" value="P:peptidoglycan biosynthetic process"/>
    <property type="evidence" value="ECO:0007669"/>
    <property type="project" value="UniProtKB-UniRule"/>
</dbReference>
<dbReference type="GO" id="GO:0008360">
    <property type="term" value="P:regulation of cell shape"/>
    <property type="evidence" value="ECO:0007669"/>
    <property type="project" value="UniProtKB-KW"/>
</dbReference>
<dbReference type="CDD" id="cd03785">
    <property type="entry name" value="GT28_MurG"/>
    <property type="match status" value="1"/>
</dbReference>
<dbReference type="FunFam" id="3.40.50.2000:FF:000016">
    <property type="entry name" value="UDP-N-acetylglucosamine--N-acetylmuramyl-(pentapeptide) pyrophosphoryl-undecaprenol N-acetylglucosamine transferase"/>
    <property type="match status" value="1"/>
</dbReference>
<dbReference type="FunFam" id="3.40.50.2000:FF:000018">
    <property type="entry name" value="UDP-N-acetylglucosamine--N-acetylmuramyl-(pentapeptide) pyrophosphoryl-undecaprenol N-acetylglucosamine transferase"/>
    <property type="match status" value="1"/>
</dbReference>
<dbReference type="Gene3D" id="3.40.50.2000">
    <property type="entry name" value="Glycogen Phosphorylase B"/>
    <property type="match status" value="2"/>
</dbReference>
<dbReference type="HAMAP" id="MF_00033">
    <property type="entry name" value="MurG"/>
    <property type="match status" value="1"/>
</dbReference>
<dbReference type="InterPro" id="IPR006009">
    <property type="entry name" value="GlcNAc_MurG"/>
</dbReference>
<dbReference type="InterPro" id="IPR007235">
    <property type="entry name" value="Glyco_trans_28_C"/>
</dbReference>
<dbReference type="InterPro" id="IPR004276">
    <property type="entry name" value="GlycoTrans_28_N"/>
</dbReference>
<dbReference type="NCBIfam" id="TIGR01133">
    <property type="entry name" value="murG"/>
    <property type="match status" value="1"/>
</dbReference>
<dbReference type="PANTHER" id="PTHR21015:SF22">
    <property type="entry name" value="GLYCOSYLTRANSFERASE"/>
    <property type="match status" value="1"/>
</dbReference>
<dbReference type="PANTHER" id="PTHR21015">
    <property type="entry name" value="UDP-N-ACETYLGLUCOSAMINE--N-ACETYLMURAMYL-(PENTAPEPTIDE) PYROPHOSPHORYL-UNDECAPRENOL N-ACETYLGLUCOSAMINE TRANSFERASE 1"/>
    <property type="match status" value="1"/>
</dbReference>
<dbReference type="Pfam" id="PF04101">
    <property type="entry name" value="Glyco_tran_28_C"/>
    <property type="match status" value="1"/>
</dbReference>
<dbReference type="Pfam" id="PF03033">
    <property type="entry name" value="Glyco_transf_28"/>
    <property type="match status" value="1"/>
</dbReference>
<dbReference type="SUPFAM" id="SSF53756">
    <property type="entry name" value="UDP-Glycosyltransferase/glycogen phosphorylase"/>
    <property type="match status" value="1"/>
</dbReference>